<evidence type="ECO:0000250" key="1"/>
<evidence type="ECO:0000255" key="2">
    <source>
        <dbReference type="PROSITE-ProRule" id="PRU00175"/>
    </source>
</evidence>
<evidence type="ECO:0000255" key="3">
    <source>
        <dbReference type="PROSITE-ProRule" id="PRU00723"/>
    </source>
</evidence>
<evidence type="ECO:0000256" key="4">
    <source>
        <dbReference type="SAM" id="MobiDB-lite"/>
    </source>
</evidence>
<evidence type="ECO:0000305" key="5"/>
<reference key="1">
    <citation type="journal article" date="2000" name="Nature">
        <title>Sequence and analysis of chromosome 3 of the plant Arabidopsis thaliana.</title>
        <authorList>
            <person name="Salanoubat M."/>
            <person name="Lemcke K."/>
            <person name="Rieger M."/>
            <person name="Ansorge W."/>
            <person name="Unseld M."/>
            <person name="Fartmann B."/>
            <person name="Valle G."/>
            <person name="Bloecker H."/>
            <person name="Perez-Alonso M."/>
            <person name="Obermaier B."/>
            <person name="Delseny M."/>
            <person name="Boutry M."/>
            <person name="Grivell L.A."/>
            <person name="Mache R."/>
            <person name="Puigdomenech P."/>
            <person name="De Simone V."/>
            <person name="Choisne N."/>
            <person name="Artiguenave F."/>
            <person name="Robert C."/>
            <person name="Brottier P."/>
            <person name="Wincker P."/>
            <person name="Cattolico L."/>
            <person name="Weissenbach J."/>
            <person name="Saurin W."/>
            <person name="Quetier F."/>
            <person name="Schaefer M."/>
            <person name="Mueller-Auer S."/>
            <person name="Gabel C."/>
            <person name="Fuchs M."/>
            <person name="Benes V."/>
            <person name="Wurmbach E."/>
            <person name="Drzonek H."/>
            <person name="Erfle H."/>
            <person name="Jordan N."/>
            <person name="Bangert S."/>
            <person name="Wiedelmann R."/>
            <person name="Kranz H."/>
            <person name="Voss H."/>
            <person name="Holland R."/>
            <person name="Brandt P."/>
            <person name="Nyakatura G."/>
            <person name="Vezzi A."/>
            <person name="D'Angelo M."/>
            <person name="Pallavicini A."/>
            <person name="Toppo S."/>
            <person name="Simionati B."/>
            <person name="Conrad A."/>
            <person name="Hornischer K."/>
            <person name="Kauer G."/>
            <person name="Loehnert T.-H."/>
            <person name="Nordsiek G."/>
            <person name="Reichelt J."/>
            <person name="Scharfe M."/>
            <person name="Schoen O."/>
            <person name="Bargues M."/>
            <person name="Terol J."/>
            <person name="Climent J."/>
            <person name="Navarro P."/>
            <person name="Collado C."/>
            <person name="Perez-Perez A."/>
            <person name="Ottenwaelder B."/>
            <person name="Duchemin D."/>
            <person name="Cooke R."/>
            <person name="Laudie M."/>
            <person name="Berger-Llauro C."/>
            <person name="Purnelle B."/>
            <person name="Masuy D."/>
            <person name="de Haan M."/>
            <person name="Maarse A.C."/>
            <person name="Alcaraz J.-P."/>
            <person name="Cottet A."/>
            <person name="Casacuberta E."/>
            <person name="Monfort A."/>
            <person name="Argiriou A."/>
            <person name="Flores M."/>
            <person name="Liguori R."/>
            <person name="Vitale D."/>
            <person name="Mannhaupt G."/>
            <person name="Haase D."/>
            <person name="Schoof H."/>
            <person name="Rudd S."/>
            <person name="Zaccaria P."/>
            <person name="Mewes H.-W."/>
            <person name="Mayer K.F.X."/>
            <person name="Kaul S."/>
            <person name="Town C.D."/>
            <person name="Koo H.L."/>
            <person name="Tallon L.J."/>
            <person name="Jenkins J."/>
            <person name="Rooney T."/>
            <person name="Rizzo M."/>
            <person name="Walts A."/>
            <person name="Utterback T."/>
            <person name="Fujii C.Y."/>
            <person name="Shea T.P."/>
            <person name="Creasy T.H."/>
            <person name="Haas B."/>
            <person name="Maiti R."/>
            <person name="Wu D."/>
            <person name="Peterson J."/>
            <person name="Van Aken S."/>
            <person name="Pai G."/>
            <person name="Militscher J."/>
            <person name="Sellers P."/>
            <person name="Gill J.E."/>
            <person name="Feldblyum T.V."/>
            <person name="Preuss D."/>
            <person name="Lin X."/>
            <person name="Nierman W.C."/>
            <person name="Salzberg S.L."/>
            <person name="White O."/>
            <person name="Venter J.C."/>
            <person name="Fraser C.M."/>
            <person name="Kaneko T."/>
            <person name="Nakamura Y."/>
            <person name="Sato S."/>
            <person name="Kato T."/>
            <person name="Asamizu E."/>
            <person name="Sasamoto S."/>
            <person name="Kimura T."/>
            <person name="Idesawa K."/>
            <person name="Kawashima K."/>
            <person name="Kishida Y."/>
            <person name="Kiyokawa C."/>
            <person name="Kohara M."/>
            <person name="Matsumoto M."/>
            <person name="Matsuno A."/>
            <person name="Muraki A."/>
            <person name="Nakayama S."/>
            <person name="Nakazaki N."/>
            <person name="Shinpo S."/>
            <person name="Takeuchi C."/>
            <person name="Wada T."/>
            <person name="Watanabe A."/>
            <person name="Yamada M."/>
            <person name="Yasuda M."/>
            <person name="Tabata S."/>
        </authorList>
    </citation>
    <scope>NUCLEOTIDE SEQUENCE [LARGE SCALE GENOMIC DNA]</scope>
    <source>
        <strain>cv. Columbia</strain>
    </source>
</reference>
<reference key="2">
    <citation type="journal article" date="2017" name="Plant J.">
        <title>Araport11: a complete reannotation of the Arabidopsis thaliana reference genome.</title>
        <authorList>
            <person name="Cheng C.Y."/>
            <person name="Krishnakumar V."/>
            <person name="Chan A.P."/>
            <person name="Thibaud-Nissen F."/>
            <person name="Schobel S."/>
            <person name="Town C.D."/>
        </authorList>
    </citation>
    <scope>GENOME REANNOTATION</scope>
    <source>
        <strain>cv. Columbia</strain>
    </source>
</reference>
<reference key="3">
    <citation type="journal article" date="2003" name="Science">
        <title>Empirical analysis of transcriptional activity in the Arabidopsis genome.</title>
        <authorList>
            <person name="Yamada K."/>
            <person name="Lim J."/>
            <person name="Dale J.M."/>
            <person name="Chen H."/>
            <person name="Shinn P."/>
            <person name="Palm C.J."/>
            <person name="Southwick A.M."/>
            <person name="Wu H.C."/>
            <person name="Kim C.J."/>
            <person name="Nguyen M."/>
            <person name="Pham P.K."/>
            <person name="Cheuk R.F."/>
            <person name="Karlin-Newmann G."/>
            <person name="Liu S.X."/>
            <person name="Lam B."/>
            <person name="Sakano H."/>
            <person name="Wu T."/>
            <person name="Yu G."/>
            <person name="Miranda M."/>
            <person name="Quach H.L."/>
            <person name="Tripp M."/>
            <person name="Chang C.H."/>
            <person name="Lee J.M."/>
            <person name="Toriumi M.J."/>
            <person name="Chan M.M."/>
            <person name="Tang C.C."/>
            <person name="Onodera C.S."/>
            <person name="Deng J.M."/>
            <person name="Akiyama K."/>
            <person name="Ansari Y."/>
            <person name="Arakawa T."/>
            <person name="Banh J."/>
            <person name="Banno F."/>
            <person name="Bowser L."/>
            <person name="Brooks S.Y."/>
            <person name="Carninci P."/>
            <person name="Chao Q."/>
            <person name="Choy N."/>
            <person name="Enju A."/>
            <person name="Goldsmith A.D."/>
            <person name="Gurjal M."/>
            <person name="Hansen N.F."/>
            <person name="Hayashizaki Y."/>
            <person name="Johnson-Hopson C."/>
            <person name="Hsuan V.W."/>
            <person name="Iida K."/>
            <person name="Karnes M."/>
            <person name="Khan S."/>
            <person name="Koesema E."/>
            <person name="Ishida J."/>
            <person name="Jiang P.X."/>
            <person name="Jones T."/>
            <person name="Kawai J."/>
            <person name="Kamiya A."/>
            <person name="Meyers C."/>
            <person name="Nakajima M."/>
            <person name="Narusaka M."/>
            <person name="Seki M."/>
            <person name="Sakurai T."/>
            <person name="Satou M."/>
            <person name="Tamse R."/>
            <person name="Vaysberg M."/>
            <person name="Wallender E.K."/>
            <person name="Wong C."/>
            <person name="Yamamura Y."/>
            <person name="Yuan S."/>
            <person name="Shinozaki K."/>
            <person name="Davis R.W."/>
            <person name="Theologis A."/>
            <person name="Ecker J.R."/>
        </authorList>
    </citation>
    <scope>NUCLEOTIDE SEQUENCE [LARGE SCALE MRNA]</scope>
    <source>
        <strain>cv. Columbia</strain>
    </source>
</reference>
<reference key="4">
    <citation type="journal article" date="2008" name="BMC Genomics">
        <title>Genome-wide analysis of CCCH zinc finger family in Arabidopsis and rice.</title>
        <authorList>
            <person name="Wang D."/>
            <person name="Guo Y."/>
            <person name="Wu C."/>
            <person name="Yang G."/>
            <person name="Li Y."/>
            <person name="Zheng C."/>
        </authorList>
    </citation>
    <scope>NOMENCLATURE</scope>
</reference>
<comment type="function">
    <text evidence="1">E3 ubiquitin ligase catalyzing the covalent attachment of ubiquitin moieties onto substrate proteins.</text>
</comment>
<comment type="catalytic activity">
    <reaction evidence="5">
        <text>S-ubiquitinyl-[E2 ubiquitin-conjugating enzyme]-L-cysteine + [acceptor protein]-L-lysine = [E2 ubiquitin-conjugating enzyme]-L-cysteine + N(6)-ubiquitinyl-[acceptor protein]-L-lysine.</text>
        <dbReference type="EC" id="2.3.2.27"/>
    </reaction>
</comment>
<comment type="pathway">
    <text>Protein modification; protein ubiquitination.</text>
</comment>
<sequence>MSDRILCKFFVHGSCLKGENCEFSHDSKDPPNNVCTFYQKRICLYGSRCRYDHVRAASNLPLSSDSESLDRSISTTPSRHLQQQGDNNDGDKSSNVYCIHPREYPICSFAAAGDCPRGNQCPHMHGDLCNTCGKKCLHPFRPEEREEHTKECEKKQKHIEALKQSQDIECSVCLDRILSKATPGERKFGLLTECDHPFCIQCIRNWRSSAPVSGMDVNSTLRACPICRKLSYFVVPSVVWYSSPEEKKEIIDIYKAKLRSIDCKHFNFGNGNCPFGASCFYKHAYSDGHLEEVVLRHLGSQEGETVITDSIRLSEFLGGLQIF</sequence>
<gene>
    <name type="primary">MKRN</name>
    <name type="ordered locus">At3g08505</name>
    <name type="ORF">T8G24.6</name>
</gene>
<name>C3H35_ARATH</name>
<feature type="chain" id="PRO_0000371990" description="E3 ubiquitin-protein ligase makorin">
    <location>
        <begin position="1"/>
        <end position="323"/>
    </location>
</feature>
<feature type="zinc finger region" description="C3H1-type 1" evidence="3">
    <location>
        <begin position="1"/>
        <end position="28"/>
    </location>
</feature>
<feature type="zinc finger region" description="C3H1-type 2" evidence="3">
    <location>
        <begin position="29"/>
        <end position="56"/>
    </location>
</feature>
<feature type="zinc finger region" description="C3H1-type 3" evidence="3">
    <location>
        <begin position="101"/>
        <end position="128"/>
    </location>
</feature>
<feature type="zinc finger region" description="RING-type" evidence="2">
    <location>
        <begin position="170"/>
        <end position="228"/>
    </location>
</feature>
<feature type="zinc finger region" description="C3H1-type 4" evidence="3">
    <location>
        <begin position="257"/>
        <end position="286"/>
    </location>
</feature>
<feature type="region of interest" description="Disordered" evidence="4">
    <location>
        <begin position="62"/>
        <end position="92"/>
    </location>
</feature>
<feature type="region of interest" description="Makorin-type Cys-His">
    <location>
        <begin position="129"/>
        <end position="158"/>
    </location>
</feature>
<feature type="compositionally biased region" description="Low complexity" evidence="4">
    <location>
        <begin position="62"/>
        <end position="74"/>
    </location>
</feature>
<feature type="compositionally biased region" description="Polar residues" evidence="4">
    <location>
        <begin position="75"/>
        <end position="87"/>
    </location>
</feature>
<proteinExistence type="evidence at transcript level"/>
<accession>Q6IDS6</accession>
<dbReference type="EC" id="2.3.2.27" evidence="5"/>
<dbReference type="EMBL" id="AC074395">
    <property type="status" value="NOT_ANNOTATED_CDS"/>
    <property type="molecule type" value="Genomic_DNA"/>
</dbReference>
<dbReference type="EMBL" id="CP002686">
    <property type="protein sequence ID" value="AEE74638.1"/>
    <property type="molecule type" value="Genomic_DNA"/>
</dbReference>
<dbReference type="EMBL" id="CP002686">
    <property type="protein sequence ID" value="AEE74639.1"/>
    <property type="molecule type" value="Genomic_DNA"/>
</dbReference>
<dbReference type="EMBL" id="CP002686">
    <property type="protein sequence ID" value="ANM63730.1"/>
    <property type="molecule type" value="Genomic_DNA"/>
</dbReference>
<dbReference type="EMBL" id="AY070366">
    <property type="protein sequence ID" value="AAL49864.1"/>
    <property type="molecule type" value="mRNA"/>
</dbReference>
<dbReference type="EMBL" id="BT000988">
    <property type="protein sequence ID" value="AAN41388.1"/>
    <property type="molecule type" value="mRNA"/>
</dbReference>
<dbReference type="RefSeq" id="NP_001325802.1">
    <property type="nucleotide sequence ID" value="NM_001337759.1"/>
</dbReference>
<dbReference type="RefSeq" id="NP_850540.1">
    <property type="nucleotide sequence ID" value="NM_180209.1"/>
</dbReference>
<dbReference type="RefSeq" id="NP_974255.1">
    <property type="nucleotide sequence ID" value="NM_202526.2"/>
</dbReference>
<dbReference type="BioGRID" id="5333">
    <property type="interactions" value="6"/>
</dbReference>
<dbReference type="FunCoup" id="Q6IDS6">
    <property type="interactions" value="1699"/>
</dbReference>
<dbReference type="IntAct" id="Q6IDS6">
    <property type="interactions" value="5"/>
</dbReference>
<dbReference type="STRING" id="3702.Q6IDS6"/>
<dbReference type="PaxDb" id="3702-AT3G08505.2"/>
<dbReference type="ProteomicsDB" id="239131"/>
<dbReference type="EnsemblPlants" id="AT3G08505.1">
    <property type="protein sequence ID" value="AT3G08505.1"/>
    <property type="gene ID" value="AT3G08505"/>
</dbReference>
<dbReference type="EnsemblPlants" id="AT3G08505.2">
    <property type="protein sequence ID" value="AT3G08505.2"/>
    <property type="gene ID" value="AT3G08505"/>
</dbReference>
<dbReference type="EnsemblPlants" id="AT3G08505.3">
    <property type="protein sequence ID" value="AT3G08505.3"/>
    <property type="gene ID" value="AT3G08505"/>
</dbReference>
<dbReference type="GeneID" id="819998"/>
<dbReference type="Gramene" id="AT3G08505.1">
    <property type="protein sequence ID" value="AT3G08505.1"/>
    <property type="gene ID" value="AT3G08505"/>
</dbReference>
<dbReference type="Gramene" id="AT3G08505.2">
    <property type="protein sequence ID" value="AT3G08505.2"/>
    <property type="gene ID" value="AT3G08505"/>
</dbReference>
<dbReference type="Gramene" id="AT3G08505.3">
    <property type="protein sequence ID" value="AT3G08505.3"/>
    <property type="gene ID" value="AT3G08505"/>
</dbReference>
<dbReference type="KEGG" id="ath:AT3G08505"/>
<dbReference type="Araport" id="AT3G08505"/>
<dbReference type="TAIR" id="AT3G08505"/>
<dbReference type="eggNOG" id="KOG1039">
    <property type="taxonomic scope" value="Eukaryota"/>
</dbReference>
<dbReference type="HOGENOM" id="CLU_040815_1_0_1"/>
<dbReference type="InParanoid" id="Q6IDS6"/>
<dbReference type="OMA" id="EMNTRAG"/>
<dbReference type="PhylomeDB" id="Q6IDS6"/>
<dbReference type="UniPathway" id="UPA00143"/>
<dbReference type="PRO" id="PR:Q6IDS6"/>
<dbReference type="Proteomes" id="UP000006548">
    <property type="component" value="Chromosome 3"/>
</dbReference>
<dbReference type="ExpressionAtlas" id="Q6IDS6">
    <property type="expression patterns" value="baseline and differential"/>
</dbReference>
<dbReference type="GO" id="GO:0003677">
    <property type="term" value="F:DNA binding"/>
    <property type="evidence" value="ECO:0007669"/>
    <property type="project" value="UniProtKB-KW"/>
</dbReference>
<dbReference type="GO" id="GO:0061630">
    <property type="term" value="F:ubiquitin protein ligase activity"/>
    <property type="evidence" value="ECO:0007669"/>
    <property type="project" value="InterPro"/>
</dbReference>
<dbReference type="GO" id="GO:0008270">
    <property type="term" value="F:zinc ion binding"/>
    <property type="evidence" value="ECO:0007669"/>
    <property type="project" value="UniProtKB-KW"/>
</dbReference>
<dbReference type="GO" id="GO:0000209">
    <property type="term" value="P:protein polyubiquitination"/>
    <property type="evidence" value="ECO:0007669"/>
    <property type="project" value="InterPro"/>
</dbReference>
<dbReference type="CDD" id="cd16521">
    <property type="entry name" value="RING-HC_MKRN"/>
    <property type="match status" value="1"/>
</dbReference>
<dbReference type="Gene3D" id="1.20.120.1350">
    <property type="entry name" value="Pneumovirus matrix protein 2 (M2), zinc-binding domain"/>
    <property type="match status" value="1"/>
</dbReference>
<dbReference type="Gene3D" id="4.10.1000.10">
    <property type="entry name" value="Zinc finger, CCCH-type"/>
    <property type="match status" value="1"/>
</dbReference>
<dbReference type="Gene3D" id="3.30.40.10">
    <property type="entry name" value="Zinc/RING finger domain, C3HC4 (zinc finger)"/>
    <property type="match status" value="1"/>
</dbReference>
<dbReference type="InterPro" id="IPR045072">
    <property type="entry name" value="MKRN-like"/>
</dbReference>
<dbReference type="InterPro" id="IPR041367">
    <property type="entry name" value="Znf-CCCH_4"/>
</dbReference>
<dbReference type="InterPro" id="IPR018957">
    <property type="entry name" value="Znf_C3HC4_RING-type"/>
</dbReference>
<dbReference type="InterPro" id="IPR000571">
    <property type="entry name" value="Znf_CCCH"/>
</dbReference>
<dbReference type="InterPro" id="IPR036855">
    <property type="entry name" value="Znf_CCCH_sf"/>
</dbReference>
<dbReference type="InterPro" id="IPR001841">
    <property type="entry name" value="Znf_RING"/>
</dbReference>
<dbReference type="InterPro" id="IPR013083">
    <property type="entry name" value="Znf_RING/FYVE/PHD"/>
</dbReference>
<dbReference type="InterPro" id="IPR017907">
    <property type="entry name" value="Znf_RING_CS"/>
</dbReference>
<dbReference type="PANTHER" id="PTHR11224:SF10">
    <property type="entry name" value="IP09428P-RELATED"/>
    <property type="match status" value="1"/>
</dbReference>
<dbReference type="PANTHER" id="PTHR11224">
    <property type="entry name" value="MAKORIN-RELATED"/>
    <property type="match status" value="1"/>
</dbReference>
<dbReference type="Pfam" id="PF00097">
    <property type="entry name" value="zf-C3HC4"/>
    <property type="match status" value="1"/>
</dbReference>
<dbReference type="Pfam" id="PF00642">
    <property type="entry name" value="zf-CCCH"/>
    <property type="match status" value="1"/>
</dbReference>
<dbReference type="Pfam" id="PF14608">
    <property type="entry name" value="zf-CCCH_2"/>
    <property type="match status" value="2"/>
</dbReference>
<dbReference type="Pfam" id="PF18044">
    <property type="entry name" value="zf-CCCH_4"/>
    <property type="match status" value="1"/>
</dbReference>
<dbReference type="SMART" id="SM00184">
    <property type="entry name" value="RING"/>
    <property type="match status" value="1"/>
</dbReference>
<dbReference type="SMART" id="SM00356">
    <property type="entry name" value="ZnF_C3H1"/>
    <property type="match status" value="4"/>
</dbReference>
<dbReference type="SUPFAM" id="SSF90229">
    <property type="entry name" value="CCCH zinc finger"/>
    <property type="match status" value="1"/>
</dbReference>
<dbReference type="SUPFAM" id="SSF57850">
    <property type="entry name" value="RING/U-box"/>
    <property type="match status" value="1"/>
</dbReference>
<dbReference type="PROSITE" id="PS50103">
    <property type="entry name" value="ZF_C3H1"/>
    <property type="match status" value="4"/>
</dbReference>
<dbReference type="PROSITE" id="PS00518">
    <property type="entry name" value="ZF_RING_1"/>
    <property type="match status" value="1"/>
</dbReference>
<dbReference type="PROSITE" id="PS50089">
    <property type="entry name" value="ZF_RING_2"/>
    <property type="match status" value="1"/>
</dbReference>
<organism>
    <name type="scientific">Arabidopsis thaliana</name>
    <name type="common">Mouse-ear cress</name>
    <dbReference type="NCBI Taxonomy" id="3702"/>
    <lineage>
        <taxon>Eukaryota</taxon>
        <taxon>Viridiplantae</taxon>
        <taxon>Streptophyta</taxon>
        <taxon>Embryophyta</taxon>
        <taxon>Tracheophyta</taxon>
        <taxon>Spermatophyta</taxon>
        <taxon>Magnoliopsida</taxon>
        <taxon>eudicotyledons</taxon>
        <taxon>Gunneridae</taxon>
        <taxon>Pentapetalae</taxon>
        <taxon>rosids</taxon>
        <taxon>malvids</taxon>
        <taxon>Brassicales</taxon>
        <taxon>Brassicaceae</taxon>
        <taxon>Camelineae</taxon>
        <taxon>Arabidopsis</taxon>
    </lineage>
</organism>
<keyword id="KW-0238">DNA-binding</keyword>
<keyword id="KW-0479">Metal-binding</keyword>
<keyword id="KW-1185">Reference proteome</keyword>
<keyword id="KW-0677">Repeat</keyword>
<keyword id="KW-0808">Transferase</keyword>
<keyword id="KW-0833">Ubl conjugation pathway</keyword>
<keyword id="KW-0862">Zinc</keyword>
<keyword id="KW-0863">Zinc-finger</keyword>
<protein>
    <recommendedName>
        <fullName>E3 ubiquitin-protein ligase makorin</fullName>
        <ecNumber evidence="5">2.3.2.27</ecNumber>
    </recommendedName>
    <alternativeName>
        <fullName evidence="5">RING-type E3 ubiquitin transferase makorin</fullName>
    </alternativeName>
    <alternativeName>
        <fullName>Zinc finger CCCH domain-containing protein 35</fullName>
        <shortName>AtC3H35</shortName>
    </alternativeName>
</protein>